<gene>
    <name evidence="1" type="primary">rplA</name>
    <name type="ordered locus">CLJ_B3800</name>
</gene>
<proteinExistence type="inferred from homology"/>
<name>RL1_CLOB6</name>
<reference key="1">
    <citation type="submission" date="2008-05" db="EMBL/GenBank/DDBJ databases">
        <title>Genome sequence of Clostridium botulinum Ba4 strain 657.</title>
        <authorList>
            <person name="Shrivastava S."/>
            <person name="Brown J.L."/>
            <person name="Bruce D."/>
            <person name="Detter C."/>
            <person name="Munk C."/>
            <person name="Smith L.A."/>
            <person name="Smith T.J."/>
            <person name="Sutton G."/>
            <person name="Brettin T.S."/>
        </authorList>
    </citation>
    <scope>NUCLEOTIDE SEQUENCE [LARGE SCALE GENOMIC DNA]</scope>
    <source>
        <strain>657 / Type Ba4</strain>
    </source>
</reference>
<keyword id="KW-0678">Repressor</keyword>
<keyword id="KW-0687">Ribonucleoprotein</keyword>
<keyword id="KW-0689">Ribosomal protein</keyword>
<keyword id="KW-0694">RNA-binding</keyword>
<keyword id="KW-0699">rRNA-binding</keyword>
<keyword id="KW-0810">Translation regulation</keyword>
<keyword id="KW-0820">tRNA-binding</keyword>
<sequence length="229" mass="24556">MGKKYTESVKLVDKNTLYTVQEAIELVTKTSKAKFDETVELAVRLGVDPRHADQQVRGAVVLPHGTGKTVRVLVFAKGDKVNEAQEAGADFVGAEELVEKIQKENWFDFDVVVATPDMMGVVGRLGRVLGPKGLMPNPKSGTVTFDVAKAIADIKAGKVEYRVDKTAIIHVPIGKASFGEGKLSDNFHVLMEAVVKAKPAAAKGQYIKSVAISSTMGPGIKINPGKVLE</sequence>
<organism>
    <name type="scientific">Clostridium botulinum (strain 657 / Type Ba4)</name>
    <dbReference type="NCBI Taxonomy" id="515621"/>
    <lineage>
        <taxon>Bacteria</taxon>
        <taxon>Bacillati</taxon>
        <taxon>Bacillota</taxon>
        <taxon>Clostridia</taxon>
        <taxon>Eubacteriales</taxon>
        <taxon>Clostridiaceae</taxon>
        <taxon>Clostridium</taxon>
    </lineage>
</organism>
<accession>C3KVR2</accession>
<feature type="chain" id="PRO_1000214413" description="Large ribosomal subunit protein uL1">
    <location>
        <begin position="1"/>
        <end position="229"/>
    </location>
</feature>
<comment type="function">
    <text evidence="1">Binds directly to 23S rRNA. The L1 stalk is quite mobile in the ribosome, and is involved in E site tRNA release.</text>
</comment>
<comment type="function">
    <text evidence="1">Protein L1 is also a translational repressor protein, it controls the translation of the L11 operon by binding to its mRNA.</text>
</comment>
<comment type="subunit">
    <text evidence="1">Part of the 50S ribosomal subunit.</text>
</comment>
<comment type="similarity">
    <text evidence="1">Belongs to the universal ribosomal protein uL1 family.</text>
</comment>
<protein>
    <recommendedName>
        <fullName evidence="1">Large ribosomal subunit protein uL1</fullName>
    </recommendedName>
    <alternativeName>
        <fullName evidence="2">50S ribosomal protein L1</fullName>
    </alternativeName>
</protein>
<dbReference type="EMBL" id="CP001083">
    <property type="protein sequence ID" value="ACQ54133.1"/>
    <property type="molecule type" value="Genomic_DNA"/>
</dbReference>
<dbReference type="RefSeq" id="WP_003360184.1">
    <property type="nucleotide sequence ID" value="NC_012658.1"/>
</dbReference>
<dbReference type="SMR" id="C3KVR2"/>
<dbReference type="KEGG" id="cbi:CLJ_B3800"/>
<dbReference type="HOGENOM" id="CLU_062853_0_0_9"/>
<dbReference type="Proteomes" id="UP000002333">
    <property type="component" value="Chromosome"/>
</dbReference>
<dbReference type="GO" id="GO:0015934">
    <property type="term" value="C:large ribosomal subunit"/>
    <property type="evidence" value="ECO:0007669"/>
    <property type="project" value="InterPro"/>
</dbReference>
<dbReference type="GO" id="GO:0019843">
    <property type="term" value="F:rRNA binding"/>
    <property type="evidence" value="ECO:0007669"/>
    <property type="project" value="UniProtKB-UniRule"/>
</dbReference>
<dbReference type="GO" id="GO:0003735">
    <property type="term" value="F:structural constituent of ribosome"/>
    <property type="evidence" value="ECO:0007669"/>
    <property type="project" value="InterPro"/>
</dbReference>
<dbReference type="GO" id="GO:0000049">
    <property type="term" value="F:tRNA binding"/>
    <property type="evidence" value="ECO:0007669"/>
    <property type="project" value="UniProtKB-KW"/>
</dbReference>
<dbReference type="GO" id="GO:0006417">
    <property type="term" value="P:regulation of translation"/>
    <property type="evidence" value="ECO:0007669"/>
    <property type="project" value="UniProtKB-KW"/>
</dbReference>
<dbReference type="GO" id="GO:0006412">
    <property type="term" value="P:translation"/>
    <property type="evidence" value="ECO:0007669"/>
    <property type="project" value="UniProtKB-UniRule"/>
</dbReference>
<dbReference type="CDD" id="cd00403">
    <property type="entry name" value="Ribosomal_L1"/>
    <property type="match status" value="1"/>
</dbReference>
<dbReference type="FunFam" id="3.40.50.790:FF:000001">
    <property type="entry name" value="50S ribosomal protein L1"/>
    <property type="match status" value="1"/>
</dbReference>
<dbReference type="Gene3D" id="3.30.190.20">
    <property type="match status" value="1"/>
</dbReference>
<dbReference type="Gene3D" id="3.40.50.790">
    <property type="match status" value="1"/>
</dbReference>
<dbReference type="HAMAP" id="MF_01318_B">
    <property type="entry name" value="Ribosomal_uL1_B"/>
    <property type="match status" value="1"/>
</dbReference>
<dbReference type="InterPro" id="IPR005878">
    <property type="entry name" value="Ribosom_uL1_bac-type"/>
</dbReference>
<dbReference type="InterPro" id="IPR002143">
    <property type="entry name" value="Ribosomal_uL1"/>
</dbReference>
<dbReference type="InterPro" id="IPR023674">
    <property type="entry name" value="Ribosomal_uL1-like"/>
</dbReference>
<dbReference type="InterPro" id="IPR028364">
    <property type="entry name" value="Ribosomal_uL1/biogenesis"/>
</dbReference>
<dbReference type="InterPro" id="IPR016095">
    <property type="entry name" value="Ribosomal_uL1_3-a/b-sand"/>
</dbReference>
<dbReference type="InterPro" id="IPR023673">
    <property type="entry name" value="Ribosomal_uL1_CS"/>
</dbReference>
<dbReference type="NCBIfam" id="TIGR01169">
    <property type="entry name" value="rplA_bact"/>
    <property type="match status" value="1"/>
</dbReference>
<dbReference type="PANTHER" id="PTHR36427">
    <property type="entry name" value="54S RIBOSOMAL PROTEIN L1, MITOCHONDRIAL"/>
    <property type="match status" value="1"/>
</dbReference>
<dbReference type="PANTHER" id="PTHR36427:SF3">
    <property type="entry name" value="LARGE RIBOSOMAL SUBUNIT PROTEIN UL1M"/>
    <property type="match status" value="1"/>
</dbReference>
<dbReference type="Pfam" id="PF00687">
    <property type="entry name" value="Ribosomal_L1"/>
    <property type="match status" value="1"/>
</dbReference>
<dbReference type="PIRSF" id="PIRSF002155">
    <property type="entry name" value="Ribosomal_L1"/>
    <property type="match status" value="1"/>
</dbReference>
<dbReference type="SUPFAM" id="SSF56808">
    <property type="entry name" value="Ribosomal protein L1"/>
    <property type="match status" value="1"/>
</dbReference>
<dbReference type="PROSITE" id="PS01199">
    <property type="entry name" value="RIBOSOMAL_L1"/>
    <property type="match status" value="1"/>
</dbReference>
<evidence type="ECO:0000255" key="1">
    <source>
        <dbReference type="HAMAP-Rule" id="MF_01318"/>
    </source>
</evidence>
<evidence type="ECO:0000305" key="2"/>